<reference key="1">
    <citation type="journal article" date="2001" name="Genome Res.">
        <title>The complete genome sequence of the lactic acid bacterium Lactococcus lactis ssp. lactis IL1403.</title>
        <authorList>
            <person name="Bolotin A."/>
            <person name="Wincker P."/>
            <person name="Mauger S."/>
            <person name="Jaillon O."/>
            <person name="Malarme K."/>
            <person name="Weissenbach J."/>
            <person name="Ehrlich S.D."/>
            <person name="Sorokin A."/>
        </authorList>
    </citation>
    <scope>NUCLEOTIDE SEQUENCE [LARGE SCALE GENOMIC DNA]</scope>
    <source>
        <strain>IL1403</strain>
    </source>
</reference>
<gene>
    <name evidence="1" type="primary">rpsJ</name>
    <name type="ordered locus">LL2100</name>
    <name type="ORF">L0387</name>
</gene>
<accession>Q9CDW1</accession>
<proteinExistence type="inferred from homology"/>
<protein>
    <recommendedName>
        <fullName evidence="1">Small ribosomal subunit protein uS10</fullName>
    </recommendedName>
    <alternativeName>
        <fullName evidence="2">30S ribosomal protein S10</fullName>
    </alternativeName>
</protein>
<name>RS10_LACLA</name>
<feature type="chain" id="PRO_0000146542" description="Small ribosomal subunit protein uS10">
    <location>
        <begin position="1"/>
        <end position="102"/>
    </location>
</feature>
<dbReference type="EMBL" id="AE005176">
    <property type="protein sequence ID" value="AAK06198.1"/>
    <property type="molecule type" value="Genomic_DNA"/>
</dbReference>
<dbReference type="PIR" id="D86887">
    <property type="entry name" value="D86887"/>
</dbReference>
<dbReference type="RefSeq" id="NP_268257.1">
    <property type="nucleotide sequence ID" value="NC_002662.1"/>
</dbReference>
<dbReference type="RefSeq" id="WP_003129973.1">
    <property type="nucleotide sequence ID" value="NC_002662.1"/>
</dbReference>
<dbReference type="SMR" id="Q9CDW1"/>
<dbReference type="PaxDb" id="272623-L0387"/>
<dbReference type="EnsemblBacteria" id="AAK06198">
    <property type="protein sequence ID" value="AAK06198"/>
    <property type="gene ID" value="L0387"/>
</dbReference>
<dbReference type="GeneID" id="89634447"/>
<dbReference type="KEGG" id="lla:L0387"/>
<dbReference type="PATRIC" id="fig|272623.7.peg.2259"/>
<dbReference type="eggNOG" id="COG0051">
    <property type="taxonomic scope" value="Bacteria"/>
</dbReference>
<dbReference type="HOGENOM" id="CLU_122625_1_3_9"/>
<dbReference type="OrthoDB" id="9804464at2"/>
<dbReference type="PRO" id="PR:Q9CDW1"/>
<dbReference type="Proteomes" id="UP000002196">
    <property type="component" value="Chromosome"/>
</dbReference>
<dbReference type="GO" id="GO:1990904">
    <property type="term" value="C:ribonucleoprotein complex"/>
    <property type="evidence" value="ECO:0007669"/>
    <property type="project" value="UniProtKB-KW"/>
</dbReference>
<dbReference type="GO" id="GO:0005840">
    <property type="term" value="C:ribosome"/>
    <property type="evidence" value="ECO:0007669"/>
    <property type="project" value="UniProtKB-KW"/>
</dbReference>
<dbReference type="GO" id="GO:0003735">
    <property type="term" value="F:structural constituent of ribosome"/>
    <property type="evidence" value="ECO:0007669"/>
    <property type="project" value="InterPro"/>
</dbReference>
<dbReference type="GO" id="GO:0000049">
    <property type="term" value="F:tRNA binding"/>
    <property type="evidence" value="ECO:0007669"/>
    <property type="project" value="UniProtKB-UniRule"/>
</dbReference>
<dbReference type="GO" id="GO:0006412">
    <property type="term" value="P:translation"/>
    <property type="evidence" value="ECO:0007669"/>
    <property type="project" value="UniProtKB-UniRule"/>
</dbReference>
<dbReference type="FunFam" id="3.30.70.600:FF:000001">
    <property type="entry name" value="30S ribosomal protein S10"/>
    <property type="match status" value="1"/>
</dbReference>
<dbReference type="Gene3D" id="3.30.70.600">
    <property type="entry name" value="Ribosomal protein S10 domain"/>
    <property type="match status" value="1"/>
</dbReference>
<dbReference type="HAMAP" id="MF_00508">
    <property type="entry name" value="Ribosomal_uS10"/>
    <property type="match status" value="1"/>
</dbReference>
<dbReference type="InterPro" id="IPR001848">
    <property type="entry name" value="Ribosomal_uS10"/>
</dbReference>
<dbReference type="InterPro" id="IPR018268">
    <property type="entry name" value="Ribosomal_uS10_CS"/>
</dbReference>
<dbReference type="InterPro" id="IPR027486">
    <property type="entry name" value="Ribosomal_uS10_dom"/>
</dbReference>
<dbReference type="InterPro" id="IPR036838">
    <property type="entry name" value="Ribosomal_uS10_dom_sf"/>
</dbReference>
<dbReference type="NCBIfam" id="NF001861">
    <property type="entry name" value="PRK00596.1"/>
    <property type="match status" value="1"/>
</dbReference>
<dbReference type="NCBIfam" id="TIGR01049">
    <property type="entry name" value="rpsJ_bact"/>
    <property type="match status" value="1"/>
</dbReference>
<dbReference type="PANTHER" id="PTHR11700">
    <property type="entry name" value="30S RIBOSOMAL PROTEIN S10 FAMILY MEMBER"/>
    <property type="match status" value="1"/>
</dbReference>
<dbReference type="Pfam" id="PF00338">
    <property type="entry name" value="Ribosomal_S10"/>
    <property type="match status" value="1"/>
</dbReference>
<dbReference type="PRINTS" id="PR00971">
    <property type="entry name" value="RIBOSOMALS10"/>
</dbReference>
<dbReference type="SMART" id="SM01403">
    <property type="entry name" value="Ribosomal_S10"/>
    <property type="match status" value="1"/>
</dbReference>
<dbReference type="SUPFAM" id="SSF54999">
    <property type="entry name" value="Ribosomal protein S10"/>
    <property type="match status" value="1"/>
</dbReference>
<dbReference type="PROSITE" id="PS00361">
    <property type="entry name" value="RIBOSOMAL_S10"/>
    <property type="match status" value="1"/>
</dbReference>
<organism>
    <name type="scientific">Lactococcus lactis subsp. lactis (strain IL1403)</name>
    <name type="common">Streptococcus lactis</name>
    <dbReference type="NCBI Taxonomy" id="272623"/>
    <lineage>
        <taxon>Bacteria</taxon>
        <taxon>Bacillati</taxon>
        <taxon>Bacillota</taxon>
        <taxon>Bacilli</taxon>
        <taxon>Lactobacillales</taxon>
        <taxon>Streptococcaceae</taxon>
        <taxon>Lactococcus</taxon>
    </lineage>
</organism>
<comment type="function">
    <text evidence="1">Involved in the binding of tRNA to the ribosomes.</text>
</comment>
<comment type="subunit">
    <text evidence="1">Part of the 30S ribosomal subunit.</text>
</comment>
<comment type="similarity">
    <text evidence="1">Belongs to the universal ribosomal protein uS10 family.</text>
</comment>
<evidence type="ECO:0000255" key="1">
    <source>
        <dbReference type="HAMAP-Rule" id="MF_00508"/>
    </source>
</evidence>
<evidence type="ECO:0000305" key="2"/>
<sequence length="102" mass="11742">MATKKIRIRLKAYEHRILDAAAEKIVETAKRTNAEVSGPIPLPTDRSVYTVIRATHKYKDSREQFEMRTHKRLIDIIEPTQKTVDSLMKLDLPSGVNIEIKL</sequence>
<keyword id="KW-1185">Reference proteome</keyword>
<keyword id="KW-0687">Ribonucleoprotein</keyword>
<keyword id="KW-0689">Ribosomal protein</keyword>